<reference key="1">
    <citation type="submission" date="2009-06" db="EMBL/GenBank/DDBJ databases">
        <title>Complete sequence of chromosome of Geopacillus sp. WCH70.</title>
        <authorList>
            <consortium name="US DOE Joint Genome Institute"/>
            <person name="Lucas S."/>
            <person name="Copeland A."/>
            <person name="Lapidus A."/>
            <person name="Glavina del Rio T."/>
            <person name="Dalin E."/>
            <person name="Tice H."/>
            <person name="Bruce D."/>
            <person name="Goodwin L."/>
            <person name="Pitluck S."/>
            <person name="Chertkov O."/>
            <person name="Brettin T."/>
            <person name="Detter J.C."/>
            <person name="Han C."/>
            <person name="Larimer F."/>
            <person name="Land M."/>
            <person name="Hauser L."/>
            <person name="Kyrpides N."/>
            <person name="Mikhailova N."/>
            <person name="Brumm P."/>
            <person name="Mead D.A."/>
            <person name="Richardson P."/>
        </authorList>
    </citation>
    <scope>NUCLEOTIDE SEQUENCE [LARGE SCALE GENOMIC DNA]</scope>
    <source>
        <strain>WCH70</strain>
    </source>
</reference>
<comment type="function">
    <text evidence="1">Catalyzes the formation of phosphatidylethanolamine (PtdEtn) from phosphatidylserine (PtdSer).</text>
</comment>
<comment type="catalytic activity">
    <reaction evidence="1">
        <text>a 1,2-diacyl-sn-glycero-3-phospho-L-serine + H(+) = a 1,2-diacyl-sn-glycero-3-phosphoethanolamine + CO2</text>
        <dbReference type="Rhea" id="RHEA:20828"/>
        <dbReference type="ChEBI" id="CHEBI:15378"/>
        <dbReference type="ChEBI" id="CHEBI:16526"/>
        <dbReference type="ChEBI" id="CHEBI:57262"/>
        <dbReference type="ChEBI" id="CHEBI:64612"/>
        <dbReference type="EC" id="4.1.1.65"/>
    </reaction>
</comment>
<comment type="cofactor">
    <cofactor evidence="1">
        <name>pyruvate</name>
        <dbReference type="ChEBI" id="CHEBI:15361"/>
    </cofactor>
    <text evidence="1">Binds 1 pyruvoyl group covalently per subunit.</text>
</comment>
<comment type="pathway">
    <text evidence="1">Phospholipid metabolism; phosphatidylethanolamine biosynthesis; phosphatidylethanolamine from CDP-diacylglycerol: step 2/2.</text>
</comment>
<comment type="subunit">
    <text evidence="1">Heterodimer of a large membrane-associated beta subunit and a small pyruvoyl-containing alpha subunit.</text>
</comment>
<comment type="subcellular location">
    <subcellularLocation>
        <location evidence="1">Cell membrane</location>
        <topology evidence="1">Peripheral membrane protein</topology>
    </subcellularLocation>
</comment>
<comment type="PTM">
    <text evidence="1">Is synthesized initially as an inactive proenzyme. Formation of the active enzyme involves a self-maturation process in which the active site pyruvoyl group is generated from an internal serine residue via an autocatalytic post-translational modification. Two non-identical subunits are generated from the proenzyme in this reaction, and the pyruvate is formed at the N-terminus of the alpha chain, which is derived from the carboxyl end of the proenzyme. The autoendoproteolytic cleavage occurs by a canonical serine protease mechanism, in which the side chain hydroxyl group of the serine supplies its oxygen atom to form the C-terminus of the beta chain, while the remainder of the serine residue undergoes an oxidative deamination to produce ammonia and the pyruvoyl prosthetic group on the alpha chain. During this reaction, the Ser that is part of the protease active site of the proenzyme becomes the pyruvoyl prosthetic group, which constitutes an essential element of the active site of the mature decarboxylase.</text>
</comment>
<comment type="similarity">
    <text evidence="1">Belongs to the phosphatidylserine decarboxylase family. PSD-B subfamily. Prokaryotic type I sub-subfamily.</text>
</comment>
<sequence length="259" mass="29319">MLKWLYRLMIELTNHSLSSKMIAIFTKSRLSALLIPSYAKIYDINQEEMEKNLKNYETLQQLFIRKLKAGTRPIDQTKNSVISPVDAIIEDIGVIRENSEIVVKGKTYSIAEMLGSDEAAKKYLNGLFIILYLSPSHYHRIHSPISGVVQKQWALGKKSYPVNRLGLKYGKRPLSKNYRMITEVAANGKHIAIVKIGAMFVNSIELTHASEHLTKGQEIAYFSFGSTVVLLFEKDSIELDERIVAPMGVKVGERIGYLK</sequence>
<name>PSD_GEOSW</name>
<proteinExistence type="inferred from homology"/>
<dbReference type="EC" id="4.1.1.65" evidence="1"/>
<dbReference type="EMBL" id="CP001638">
    <property type="protein sequence ID" value="ACS25158.1"/>
    <property type="molecule type" value="Genomic_DNA"/>
</dbReference>
<dbReference type="SMR" id="C5D4W6"/>
<dbReference type="STRING" id="471223.GWCH70_2462"/>
<dbReference type="KEGG" id="gwc:GWCH70_2462"/>
<dbReference type="eggNOG" id="COG0688">
    <property type="taxonomic scope" value="Bacteria"/>
</dbReference>
<dbReference type="HOGENOM" id="CLU_029061_4_0_9"/>
<dbReference type="OrthoDB" id="9802030at2"/>
<dbReference type="UniPathway" id="UPA00558">
    <property type="reaction ID" value="UER00616"/>
</dbReference>
<dbReference type="GO" id="GO:0005886">
    <property type="term" value="C:plasma membrane"/>
    <property type="evidence" value="ECO:0007669"/>
    <property type="project" value="UniProtKB-SubCell"/>
</dbReference>
<dbReference type="GO" id="GO:0004609">
    <property type="term" value="F:phosphatidylserine decarboxylase activity"/>
    <property type="evidence" value="ECO:0007669"/>
    <property type="project" value="UniProtKB-UniRule"/>
</dbReference>
<dbReference type="GO" id="GO:0006646">
    <property type="term" value="P:phosphatidylethanolamine biosynthetic process"/>
    <property type="evidence" value="ECO:0007669"/>
    <property type="project" value="UniProtKB-UniRule"/>
</dbReference>
<dbReference type="HAMAP" id="MF_00662">
    <property type="entry name" value="PS_decarb_PSD_B_type1"/>
    <property type="match status" value="1"/>
</dbReference>
<dbReference type="InterPro" id="IPR003817">
    <property type="entry name" value="PS_Dcarbxylase"/>
</dbReference>
<dbReference type="InterPro" id="IPR033177">
    <property type="entry name" value="PSD-B"/>
</dbReference>
<dbReference type="InterPro" id="IPR033178">
    <property type="entry name" value="PSD_type1_pro"/>
</dbReference>
<dbReference type="NCBIfam" id="NF002853">
    <property type="entry name" value="PRK03140.1"/>
    <property type="match status" value="1"/>
</dbReference>
<dbReference type="NCBIfam" id="TIGR00163">
    <property type="entry name" value="PS_decarb"/>
    <property type="match status" value="1"/>
</dbReference>
<dbReference type="PANTHER" id="PTHR10067">
    <property type="entry name" value="PHOSPHATIDYLSERINE DECARBOXYLASE"/>
    <property type="match status" value="1"/>
</dbReference>
<dbReference type="PANTHER" id="PTHR10067:SF6">
    <property type="entry name" value="PHOSPHATIDYLSERINE DECARBOXYLASE PROENZYME, MITOCHONDRIAL"/>
    <property type="match status" value="1"/>
</dbReference>
<dbReference type="Pfam" id="PF02666">
    <property type="entry name" value="PS_Dcarbxylase"/>
    <property type="match status" value="1"/>
</dbReference>
<gene>
    <name evidence="1" type="primary">psd</name>
    <name type="ordered locus">GWCH70_2462</name>
</gene>
<keyword id="KW-1003">Cell membrane</keyword>
<keyword id="KW-0210">Decarboxylase</keyword>
<keyword id="KW-0444">Lipid biosynthesis</keyword>
<keyword id="KW-0443">Lipid metabolism</keyword>
<keyword id="KW-0456">Lyase</keyword>
<keyword id="KW-0472">Membrane</keyword>
<keyword id="KW-0594">Phospholipid biosynthesis</keyword>
<keyword id="KW-1208">Phospholipid metabolism</keyword>
<keyword id="KW-0670">Pyruvate</keyword>
<keyword id="KW-0865">Zymogen</keyword>
<evidence type="ECO:0000255" key="1">
    <source>
        <dbReference type="HAMAP-Rule" id="MF_00662"/>
    </source>
</evidence>
<organism>
    <name type="scientific">Geobacillus sp. (strain WCH70)</name>
    <dbReference type="NCBI Taxonomy" id="471223"/>
    <lineage>
        <taxon>Bacteria</taxon>
        <taxon>Bacillati</taxon>
        <taxon>Bacillota</taxon>
        <taxon>Bacilli</taxon>
        <taxon>Bacillales</taxon>
        <taxon>Anoxybacillaceae</taxon>
        <taxon>Geobacillus</taxon>
    </lineage>
</organism>
<feature type="chain" id="PRO_1000212483" description="Phosphatidylserine decarboxylase beta chain" evidence="1">
    <location>
        <begin position="1"/>
        <end position="225"/>
    </location>
</feature>
<feature type="chain" id="PRO_1000212484" description="Phosphatidylserine decarboxylase alpha chain" evidence="1">
    <location>
        <begin position="226"/>
        <end position="259"/>
    </location>
</feature>
<feature type="active site" description="Charge relay system; for autoendoproteolytic cleavage activity" evidence="1">
    <location>
        <position position="86"/>
    </location>
</feature>
<feature type="active site" description="Charge relay system; for autoendoproteolytic cleavage activity" evidence="1">
    <location>
        <position position="142"/>
    </location>
</feature>
<feature type="active site" description="Charge relay system; for autoendoproteolytic cleavage activity" evidence="1">
    <location>
        <position position="226"/>
    </location>
</feature>
<feature type="active site" description="Schiff-base intermediate with substrate; via pyruvic acid; for decarboxylase activity" evidence="1">
    <location>
        <position position="226"/>
    </location>
</feature>
<feature type="site" description="Cleavage (non-hydrolytic); by autocatalysis" evidence="1">
    <location>
        <begin position="225"/>
        <end position="226"/>
    </location>
</feature>
<feature type="modified residue" description="Pyruvic acid (Ser); by autocatalysis" evidence="1">
    <location>
        <position position="226"/>
    </location>
</feature>
<protein>
    <recommendedName>
        <fullName evidence="1">Phosphatidylserine decarboxylase proenzyme</fullName>
        <ecNumber evidence="1">4.1.1.65</ecNumber>
    </recommendedName>
    <component>
        <recommendedName>
            <fullName evidence="1">Phosphatidylserine decarboxylase alpha chain</fullName>
        </recommendedName>
    </component>
    <component>
        <recommendedName>
            <fullName evidence="1">Phosphatidylserine decarboxylase beta chain</fullName>
        </recommendedName>
    </component>
</protein>
<accession>C5D4W6</accession>